<reference key="1">
    <citation type="journal article" date="2011" name="J. Bacteriol.">
        <title>Complete genome sequence of the plant growth-promoting endophyte Burkholderia phytofirmans strain PsJN.</title>
        <authorList>
            <person name="Weilharter A."/>
            <person name="Mitter B."/>
            <person name="Shin M.V."/>
            <person name="Chain P.S."/>
            <person name="Nowak J."/>
            <person name="Sessitsch A."/>
        </authorList>
    </citation>
    <scope>NUCLEOTIDE SEQUENCE [LARGE SCALE GENOMIC DNA]</scope>
    <source>
        <strain>DSM 17436 / LMG 22146 / PsJN</strain>
    </source>
</reference>
<sequence length="453" mass="47965">MNIVILAAGTGKRMRSALPKVLHPLAGQPLLAHVIDTARTLKPTHLVVVVGHGAEAVRKAVAAPDVQFAVQEQQLGTGHAVQQALPLLDPSAPTLVLYGDVPLTRAGTLQALTERAGQGGYGVLTVTLADPSGYGRIVRDAQGKVARIVEQKDATPEQLEIAEINTGIIVAPTERLGRWLAALKNDNAQGEFYLTDAVEMAIEAGLEVVTTQPEDEWETLGVNSKQQLAELERIHQHNVADALLVAGVTLADPARLDVRGTLECGRDVSIDVNCVFEGRVTLADNVTIGPNCVIRDANIGAGTRVDAFTHIEGAEVGANAVLGPYARLRPGASLHDESHVGNFVEVKNAVLGRGSKANHLTYIGDSDIGARVNIGAGTITCNYDGANKFRTIIEDDVFVGSDTQLVAPVRVKRGATIAAGTTVWKDVEADALVLNDKTQTSKTGYVRPTKKKS</sequence>
<dbReference type="EC" id="2.7.7.23" evidence="1"/>
<dbReference type="EC" id="2.3.1.157" evidence="1"/>
<dbReference type="EMBL" id="CP001052">
    <property type="protein sequence ID" value="ACD18117.1"/>
    <property type="molecule type" value="Genomic_DNA"/>
</dbReference>
<dbReference type="RefSeq" id="WP_012434645.1">
    <property type="nucleotide sequence ID" value="NC_010681.1"/>
</dbReference>
<dbReference type="SMR" id="B2T6U5"/>
<dbReference type="STRING" id="398527.Bphyt_3729"/>
<dbReference type="KEGG" id="bpy:Bphyt_3729"/>
<dbReference type="eggNOG" id="COG1207">
    <property type="taxonomic scope" value="Bacteria"/>
</dbReference>
<dbReference type="HOGENOM" id="CLU_029499_15_2_4"/>
<dbReference type="OrthoDB" id="9775031at2"/>
<dbReference type="UniPathway" id="UPA00113">
    <property type="reaction ID" value="UER00532"/>
</dbReference>
<dbReference type="UniPathway" id="UPA00113">
    <property type="reaction ID" value="UER00533"/>
</dbReference>
<dbReference type="UniPathway" id="UPA00973"/>
<dbReference type="Proteomes" id="UP000001739">
    <property type="component" value="Chromosome 1"/>
</dbReference>
<dbReference type="GO" id="GO:0005737">
    <property type="term" value="C:cytoplasm"/>
    <property type="evidence" value="ECO:0007669"/>
    <property type="project" value="UniProtKB-SubCell"/>
</dbReference>
<dbReference type="GO" id="GO:0016020">
    <property type="term" value="C:membrane"/>
    <property type="evidence" value="ECO:0007669"/>
    <property type="project" value="GOC"/>
</dbReference>
<dbReference type="GO" id="GO:0019134">
    <property type="term" value="F:glucosamine-1-phosphate N-acetyltransferase activity"/>
    <property type="evidence" value="ECO:0007669"/>
    <property type="project" value="UniProtKB-UniRule"/>
</dbReference>
<dbReference type="GO" id="GO:0000287">
    <property type="term" value="F:magnesium ion binding"/>
    <property type="evidence" value="ECO:0007669"/>
    <property type="project" value="UniProtKB-UniRule"/>
</dbReference>
<dbReference type="GO" id="GO:0003977">
    <property type="term" value="F:UDP-N-acetylglucosamine diphosphorylase activity"/>
    <property type="evidence" value="ECO:0007669"/>
    <property type="project" value="UniProtKB-UniRule"/>
</dbReference>
<dbReference type="GO" id="GO:0000902">
    <property type="term" value="P:cell morphogenesis"/>
    <property type="evidence" value="ECO:0007669"/>
    <property type="project" value="UniProtKB-UniRule"/>
</dbReference>
<dbReference type="GO" id="GO:0071555">
    <property type="term" value="P:cell wall organization"/>
    <property type="evidence" value="ECO:0007669"/>
    <property type="project" value="UniProtKB-KW"/>
</dbReference>
<dbReference type="GO" id="GO:0009245">
    <property type="term" value="P:lipid A biosynthetic process"/>
    <property type="evidence" value="ECO:0007669"/>
    <property type="project" value="UniProtKB-UniRule"/>
</dbReference>
<dbReference type="GO" id="GO:0009252">
    <property type="term" value="P:peptidoglycan biosynthetic process"/>
    <property type="evidence" value="ECO:0007669"/>
    <property type="project" value="UniProtKB-UniRule"/>
</dbReference>
<dbReference type="GO" id="GO:0008360">
    <property type="term" value="P:regulation of cell shape"/>
    <property type="evidence" value="ECO:0007669"/>
    <property type="project" value="UniProtKB-KW"/>
</dbReference>
<dbReference type="GO" id="GO:0006048">
    <property type="term" value="P:UDP-N-acetylglucosamine biosynthetic process"/>
    <property type="evidence" value="ECO:0007669"/>
    <property type="project" value="UniProtKB-UniPathway"/>
</dbReference>
<dbReference type="CDD" id="cd02540">
    <property type="entry name" value="GT2_GlmU_N_bac"/>
    <property type="match status" value="1"/>
</dbReference>
<dbReference type="CDD" id="cd03353">
    <property type="entry name" value="LbH_GlmU_C"/>
    <property type="match status" value="1"/>
</dbReference>
<dbReference type="Gene3D" id="2.160.10.10">
    <property type="entry name" value="Hexapeptide repeat proteins"/>
    <property type="match status" value="1"/>
</dbReference>
<dbReference type="Gene3D" id="3.90.550.10">
    <property type="entry name" value="Spore Coat Polysaccharide Biosynthesis Protein SpsA, Chain A"/>
    <property type="match status" value="1"/>
</dbReference>
<dbReference type="HAMAP" id="MF_01631">
    <property type="entry name" value="GlmU"/>
    <property type="match status" value="1"/>
</dbReference>
<dbReference type="InterPro" id="IPR005882">
    <property type="entry name" value="Bifunctional_GlmU"/>
</dbReference>
<dbReference type="InterPro" id="IPR050065">
    <property type="entry name" value="GlmU-like"/>
</dbReference>
<dbReference type="InterPro" id="IPR038009">
    <property type="entry name" value="GlmU_C_LbH"/>
</dbReference>
<dbReference type="InterPro" id="IPR001451">
    <property type="entry name" value="Hexapep"/>
</dbReference>
<dbReference type="InterPro" id="IPR025877">
    <property type="entry name" value="MobA-like_NTP_Trfase"/>
</dbReference>
<dbReference type="InterPro" id="IPR029044">
    <property type="entry name" value="Nucleotide-diphossugar_trans"/>
</dbReference>
<dbReference type="InterPro" id="IPR011004">
    <property type="entry name" value="Trimer_LpxA-like_sf"/>
</dbReference>
<dbReference type="NCBIfam" id="TIGR01173">
    <property type="entry name" value="glmU"/>
    <property type="match status" value="1"/>
</dbReference>
<dbReference type="PANTHER" id="PTHR43584:SF3">
    <property type="entry name" value="BIFUNCTIONAL PROTEIN GLMU"/>
    <property type="match status" value="1"/>
</dbReference>
<dbReference type="PANTHER" id="PTHR43584">
    <property type="entry name" value="NUCLEOTIDYL TRANSFERASE"/>
    <property type="match status" value="1"/>
</dbReference>
<dbReference type="Pfam" id="PF00132">
    <property type="entry name" value="Hexapep"/>
    <property type="match status" value="1"/>
</dbReference>
<dbReference type="Pfam" id="PF14602">
    <property type="entry name" value="Hexapep_2"/>
    <property type="match status" value="1"/>
</dbReference>
<dbReference type="Pfam" id="PF12804">
    <property type="entry name" value="NTP_transf_3"/>
    <property type="match status" value="1"/>
</dbReference>
<dbReference type="SUPFAM" id="SSF53448">
    <property type="entry name" value="Nucleotide-diphospho-sugar transferases"/>
    <property type="match status" value="1"/>
</dbReference>
<dbReference type="SUPFAM" id="SSF51161">
    <property type="entry name" value="Trimeric LpxA-like enzymes"/>
    <property type="match status" value="1"/>
</dbReference>
<name>GLMU_PARPJ</name>
<organism>
    <name type="scientific">Paraburkholderia phytofirmans (strain DSM 17436 / LMG 22146 / PsJN)</name>
    <name type="common">Burkholderia phytofirmans</name>
    <dbReference type="NCBI Taxonomy" id="398527"/>
    <lineage>
        <taxon>Bacteria</taxon>
        <taxon>Pseudomonadati</taxon>
        <taxon>Pseudomonadota</taxon>
        <taxon>Betaproteobacteria</taxon>
        <taxon>Burkholderiales</taxon>
        <taxon>Burkholderiaceae</taxon>
        <taxon>Paraburkholderia</taxon>
    </lineage>
</organism>
<protein>
    <recommendedName>
        <fullName evidence="1">Bifunctional protein GlmU</fullName>
    </recommendedName>
    <domain>
        <recommendedName>
            <fullName evidence="1">UDP-N-acetylglucosamine pyrophosphorylase</fullName>
            <ecNumber evidence="1">2.7.7.23</ecNumber>
        </recommendedName>
        <alternativeName>
            <fullName evidence="1">N-acetylglucosamine-1-phosphate uridyltransferase</fullName>
        </alternativeName>
    </domain>
    <domain>
        <recommendedName>
            <fullName evidence="1">Glucosamine-1-phosphate N-acetyltransferase</fullName>
            <ecNumber evidence="1">2.3.1.157</ecNumber>
        </recommendedName>
    </domain>
</protein>
<keyword id="KW-0012">Acyltransferase</keyword>
<keyword id="KW-0133">Cell shape</keyword>
<keyword id="KW-0961">Cell wall biogenesis/degradation</keyword>
<keyword id="KW-0963">Cytoplasm</keyword>
<keyword id="KW-0460">Magnesium</keyword>
<keyword id="KW-0479">Metal-binding</keyword>
<keyword id="KW-0511">Multifunctional enzyme</keyword>
<keyword id="KW-0548">Nucleotidyltransferase</keyword>
<keyword id="KW-0573">Peptidoglycan synthesis</keyword>
<keyword id="KW-0677">Repeat</keyword>
<keyword id="KW-0808">Transferase</keyword>
<proteinExistence type="inferred from homology"/>
<gene>
    <name evidence="1" type="primary">glmU</name>
    <name type="ordered locus">Bphyt_3729</name>
</gene>
<comment type="function">
    <text evidence="1">Catalyzes the last two sequential reactions in the de novo biosynthetic pathway for UDP-N-acetylglucosamine (UDP-GlcNAc). The C-terminal domain catalyzes the transfer of acetyl group from acetyl coenzyme A to glucosamine-1-phosphate (GlcN-1-P) to produce N-acetylglucosamine-1-phosphate (GlcNAc-1-P), which is converted into UDP-GlcNAc by the transfer of uridine 5-monophosphate (from uridine 5-triphosphate), a reaction catalyzed by the N-terminal domain.</text>
</comment>
<comment type="catalytic activity">
    <reaction evidence="1">
        <text>alpha-D-glucosamine 1-phosphate + acetyl-CoA = N-acetyl-alpha-D-glucosamine 1-phosphate + CoA + H(+)</text>
        <dbReference type="Rhea" id="RHEA:13725"/>
        <dbReference type="ChEBI" id="CHEBI:15378"/>
        <dbReference type="ChEBI" id="CHEBI:57287"/>
        <dbReference type="ChEBI" id="CHEBI:57288"/>
        <dbReference type="ChEBI" id="CHEBI:57776"/>
        <dbReference type="ChEBI" id="CHEBI:58516"/>
        <dbReference type="EC" id="2.3.1.157"/>
    </reaction>
</comment>
<comment type="catalytic activity">
    <reaction evidence="1">
        <text>N-acetyl-alpha-D-glucosamine 1-phosphate + UTP + H(+) = UDP-N-acetyl-alpha-D-glucosamine + diphosphate</text>
        <dbReference type="Rhea" id="RHEA:13509"/>
        <dbReference type="ChEBI" id="CHEBI:15378"/>
        <dbReference type="ChEBI" id="CHEBI:33019"/>
        <dbReference type="ChEBI" id="CHEBI:46398"/>
        <dbReference type="ChEBI" id="CHEBI:57705"/>
        <dbReference type="ChEBI" id="CHEBI:57776"/>
        <dbReference type="EC" id="2.7.7.23"/>
    </reaction>
</comment>
<comment type="cofactor">
    <cofactor evidence="1">
        <name>Mg(2+)</name>
        <dbReference type="ChEBI" id="CHEBI:18420"/>
    </cofactor>
    <text evidence="1">Binds 1 Mg(2+) ion per subunit.</text>
</comment>
<comment type="pathway">
    <text evidence="1">Nucleotide-sugar biosynthesis; UDP-N-acetyl-alpha-D-glucosamine biosynthesis; N-acetyl-alpha-D-glucosamine 1-phosphate from alpha-D-glucosamine 6-phosphate (route II): step 2/2.</text>
</comment>
<comment type="pathway">
    <text evidence="1">Nucleotide-sugar biosynthesis; UDP-N-acetyl-alpha-D-glucosamine biosynthesis; UDP-N-acetyl-alpha-D-glucosamine from N-acetyl-alpha-D-glucosamine 1-phosphate: step 1/1.</text>
</comment>
<comment type="pathway">
    <text evidence="1">Bacterial outer membrane biogenesis; LPS lipid A biosynthesis.</text>
</comment>
<comment type="subunit">
    <text evidence="1">Homotrimer.</text>
</comment>
<comment type="subcellular location">
    <subcellularLocation>
        <location evidence="1">Cytoplasm</location>
    </subcellularLocation>
</comment>
<comment type="similarity">
    <text evidence="1">In the N-terminal section; belongs to the N-acetylglucosamine-1-phosphate uridyltransferase family.</text>
</comment>
<comment type="similarity">
    <text evidence="1">In the C-terminal section; belongs to the transferase hexapeptide repeat family.</text>
</comment>
<feature type="chain" id="PRO_1000186419" description="Bifunctional protein GlmU">
    <location>
        <begin position="1"/>
        <end position="453"/>
    </location>
</feature>
<feature type="region of interest" description="Pyrophosphorylase" evidence="1">
    <location>
        <begin position="1"/>
        <end position="225"/>
    </location>
</feature>
<feature type="region of interest" description="Linker" evidence="1">
    <location>
        <begin position="226"/>
        <end position="246"/>
    </location>
</feature>
<feature type="region of interest" description="N-acetyltransferase" evidence="1">
    <location>
        <begin position="247"/>
        <end position="453"/>
    </location>
</feature>
<feature type="active site" description="Proton acceptor" evidence="1">
    <location>
        <position position="359"/>
    </location>
</feature>
<feature type="binding site" evidence="1">
    <location>
        <begin position="6"/>
        <end position="9"/>
    </location>
    <ligand>
        <name>UDP-N-acetyl-alpha-D-glucosamine</name>
        <dbReference type="ChEBI" id="CHEBI:57705"/>
    </ligand>
</feature>
<feature type="binding site" evidence="1">
    <location>
        <position position="20"/>
    </location>
    <ligand>
        <name>UDP-N-acetyl-alpha-D-glucosamine</name>
        <dbReference type="ChEBI" id="CHEBI:57705"/>
    </ligand>
</feature>
<feature type="binding site" evidence="1">
    <location>
        <position position="71"/>
    </location>
    <ligand>
        <name>UDP-N-acetyl-alpha-D-glucosamine</name>
        <dbReference type="ChEBI" id="CHEBI:57705"/>
    </ligand>
</feature>
<feature type="binding site" evidence="1">
    <location>
        <begin position="76"/>
        <end position="77"/>
    </location>
    <ligand>
        <name>UDP-N-acetyl-alpha-D-glucosamine</name>
        <dbReference type="ChEBI" id="CHEBI:57705"/>
    </ligand>
</feature>
<feature type="binding site" evidence="1">
    <location>
        <begin position="98"/>
        <end position="100"/>
    </location>
    <ligand>
        <name>UDP-N-acetyl-alpha-D-glucosamine</name>
        <dbReference type="ChEBI" id="CHEBI:57705"/>
    </ligand>
</feature>
<feature type="binding site" evidence="1">
    <location>
        <position position="100"/>
    </location>
    <ligand>
        <name>Mg(2+)</name>
        <dbReference type="ChEBI" id="CHEBI:18420"/>
    </ligand>
</feature>
<feature type="binding site" evidence="1">
    <location>
        <position position="135"/>
    </location>
    <ligand>
        <name>UDP-N-acetyl-alpha-D-glucosamine</name>
        <dbReference type="ChEBI" id="CHEBI:57705"/>
    </ligand>
</feature>
<feature type="binding site" evidence="1">
    <location>
        <position position="150"/>
    </location>
    <ligand>
        <name>UDP-N-acetyl-alpha-D-glucosamine</name>
        <dbReference type="ChEBI" id="CHEBI:57705"/>
    </ligand>
</feature>
<feature type="binding site" evidence="1">
    <location>
        <position position="165"/>
    </location>
    <ligand>
        <name>UDP-N-acetyl-alpha-D-glucosamine</name>
        <dbReference type="ChEBI" id="CHEBI:57705"/>
    </ligand>
</feature>
<feature type="binding site" evidence="1">
    <location>
        <position position="223"/>
    </location>
    <ligand>
        <name>Mg(2+)</name>
        <dbReference type="ChEBI" id="CHEBI:18420"/>
    </ligand>
</feature>
<feature type="binding site" evidence="1">
    <location>
        <position position="223"/>
    </location>
    <ligand>
        <name>UDP-N-acetyl-alpha-D-glucosamine</name>
        <dbReference type="ChEBI" id="CHEBI:57705"/>
    </ligand>
</feature>
<feature type="binding site" evidence="1">
    <location>
        <position position="329"/>
    </location>
    <ligand>
        <name>UDP-N-acetyl-alpha-D-glucosamine</name>
        <dbReference type="ChEBI" id="CHEBI:57705"/>
    </ligand>
</feature>
<feature type="binding site" evidence="1">
    <location>
        <position position="347"/>
    </location>
    <ligand>
        <name>UDP-N-acetyl-alpha-D-glucosamine</name>
        <dbReference type="ChEBI" id="CHEBI:57705"/>
    </ligand>
</feature>
<feature type="binding site" evidence="1">
    <location>
        <position position="362"/>
    </location>
    <ligand>
        <name>UDP-N-acetyl-alpha-D-glucosamine</name>
        <dbReference type="ChEBI" id="CHEBI:57705"/>
    </ligand>
</feature>
<feature type="binding site" evidence="1">
    <location>
        <position position="373"/>
    </location>
    <ligand>
        <name>UDP-N-acetyl-alpha-D-glucosamine</name>
        <dbReference type="ChEBI" id="CHEBI:57705"/>
    </ligand>
</feature>
<feature type="binding site" evidence="1">
    <location>
        <position position="376"/>
    </location>
    <ligand>
        <name>acetyl-CoA</name>
        <dbReference type="ChEBI" id="CHEBI:57288"/>
    </ligand>
</feature>
<feature type="binding site" evidence="1">
    <location>
        <begin position="382"/>
        <end position="383"/>
    </location>
    <ligand>
        <name>acetyl-CoA</name>
        <dbReference type="ChEBI" id="CHEBI:57288"/>
    </ligand>
</feature>
<feature type="binding site" evidence="1">
    <location>
        <position position="401"/>
    </location>
    <ligand>
        <name>acetyl-CoA</name>
        <dbReference type="ChEBI" id="CHEBI:57288"/>
    </ligand>
</feature>
<feature type="binding site" evidence="1">
    <location>
        <position position="419"/>
    </location>
    <ligand>
        <name>acetyl-CoA</name>
        <dbReference type="ChEBI" id="CHEBI:57288"/>
    </ligand>
</feature>
<evidence type="ECO:0000255" key="1">
    <source>
        <dbReference type="HAMAP-Rule" id="MF_01631"/>
    </source>
</evidence>
<accession>B2T6U5</accession>